<keyword id="KW-0963">Cytoplasm</keyword>
<keyword id="KW-0378">Hydrolase</keyword>
<keyword id="KW-0694">RNA-binding</keyword>
<keyword id="KW-0820">tRNA-binding</keyword>
<proteinExistence type="inferred from homology"/>
<protein>
    <recommendedName>
        <fullName evidence="1">Peptidyl-tRNA hydrolase</fullName>
        <shortName evidence="1">Pth</shortName>
        <ecNumber evidence="1">3.1.1.29</ecNumber>
    </recommendedName>
</protein>
<reference key="1">
    <citation type="journal article" date="2004" name="Nat. Genet.">
        <title>Reductive evolution suggested from the complete genome sequence of a plant-pathogenic phytoplasma.</title>
        <authorList>
            <person name="Oshima K."/>
            <person name="Kakizawa S."/>
            <person name="Nishigawa H."/>
            <person name="Jung H.-Y."/>
            <person name="Wei W."/>
            <person name="Suzuki S."/>
            <person name="Arashida R."/>
            <person name="Nakata D."/>
            <person name="Miyata S."/>
            <person name="Ugaki M."/>
            <person name="Namba S."/>
        </authorList>
    </citation>
    <scope>NUCLEOTIDE SEQUENCE [LARGE SCALE GENOMIC DNA]</scope>
    <source>
        <strain>OY-M</strain>
    </source>
</reference>
<name>PTH_ONYPE</name>
<comment type="function">
    <text evidence="1">Hydrolyzes ribosome-free peptidyl-tRNAs (with 1 or more amino acids incorporated), which drop off the ribosome during protein synthesis, or as a result of ribosome stalling.</text>
</comment>
<comment type="function">
    <text evidence="1">Catalyzes the release of premature peptidyl moieties from peptidyl-tRNA molecules trapped in stalled 50S ribosomal subunits, and thus maintains levels of free tRNAs and 50S ribosomes.</text>
</comment>
<comment type="catalytic activity">
    <reaction evidence="1">
        <text>an N-acyl-L-alpha-aminoacyl-tRNA + H2O = an N-acyl-L-amino acid + a tRNA + H(+)</text>
        <dbReference type="Rhea" id="RHEA:54448"/>
        <dbReference type="Rhea" id="RHEA-COMP:10123"/>
        <dbReference type="Rhea" id="RHEA-COMP:13883"/>
        <dbReference type="ChEBI" id="CHEBI:15377"/>
        <dbReference type="ChEBI" id="CHEBI:15378"/>
        <dbReference type="ChEBI" id="CHEBI:59874"/>
        <dbReference type="ChEBI" id="CHEBI:78442"/>
        <dbReference type="ChEBI" id="CHEBI:138191"/>
        <dbReference type="EC" id="3.1.1.29"/>
    </reaction>
</comment>
<comment type="subunit">
    <text evidence="1">Monomer.</text>
</comment>
<comment type="subcellular location">
    <subcellularLocation>
        <location evidence="1">Cytoplasm</location>
    </subcellularLocation>
</comment>
<comment type="similarity">
    <text evidence="1">Belongs to the PTH family.</text>
</comment>
<organism>
    <name type="scientific">Onion yellows phytoplasma (strain OY-M)</name>
    <dbReference type="NCBI Taxonomy" id="262768"/>
    <lineage>
        <taxon>Bacteria</taxon>
        <taxon>Bacillati</taxon>
        <taxon>Mycoplasmatota</taxon>
        <taxon>Mollicutes</taxon>
        <taxon>Acholeplasmatales</taxon>
        <taxon>Acholeplasmataceae</taxon>
        <taxon>Candidatus Phytoplasma</taxon>
        <taxon>16SrI (Aster yellows group)</taxon>
    </lineage>
</organism>
<sequence>MKLIVGLGNPGTKFVNTRHNVGFAVVDSFLSQNKYQILKEDKTDHIYQINFNHHQSLLIKPQTYMNLSGEVVKKIINKYRIKIENILVIVDDIYLDEGKLKLKMQGGHGGHNGLRNIIDRLGTKQFKRLKIGVSLDSCMPLDQYLLTPVNASSQKNILKNINIINKIIFNFIQDVDFNILMNGYNSKL</sequence>
<dbReference type="EC" id="3.1.1.29" evidence="1"/>
<dbReference type="EMBL" id="AP006628">
    <property type="protein sequence ID" value="BAD04237.1"/>
    <property type="molecule type" value="Genomic_DNA"/>
</dbReference>
<dbReference type="SMR" id="Q6YR64"/>
<dbReference type="STRING" id="262768.PAM_152"/>
<dbReference type="KEGG" id="poy:PAM_152"/>
<dbReference type="eggNOG" id="COG0193">
    <property type="taxonomic scope" value="Bacteria"/>
</dbReference>
<dbReference type="HOGENOM" id="CLU_062456_4_1_14"/>
<dbReference type="BioCyc" id="OYEL262768:G1G26-185-MONOMER"/>
<dbReference type="Proteomes" id="UP000002523">
    <property type="component" value="Chromosome"/>
</dbReference>
<dbReference type="GO" id="GO:0005737">
    <property type="term" value="C:cytoplasm"/>
    <property type="evidence" value="ECO:0007669"/>
    <property type="project" value="UniProtKB-SubCell"/>
</dbReference>
<dbReference type="GO" id="GO:0004045">
    <property type="term" value="F:peptidyl-tRNA hydrolase activity"/>
    <property type="evidence" value="ECO:0007669"/>
    <property type="project" value="UniProtKB-UniRule"/>
</dbReference>
<dbReference type="GO" id="GO:0000049">
    <property type="term" value="F:tRNA binding"/>
    <property type="evidence" value="ECO:0007669"/>
    <property type="project" value="UniProtKB-UniRule"/>
</dbReference>
<dbReference type="GO" id="GO:0006515">
    <property type="term" value="P:protein quality control for misfolded or incompletely synthesized proteins"/>
    <property type="evidence" value="ECO:0007669"/>
    <property type="project" value="UniProtKB-UniRule"/>
</dbReference>
<dbReference type="GO" id="GO:0072344">
    <property type="term" value="P:rescue of stalled ribosome"/>
    <property type="evidence" value="ECO:0007669"/>
    <property type="project" value="UniProtKB-UniRule"/>
</dbReference>
<dbReference type="CDD" id="cd00462">
    <property type="entry name" value="PTH"/>
    <property type="match status" value="1"/>
</dbReference>
<dbReference type="FunFam" id="3.40.50.1470:FF:000001">
    <property type="entry name" value="Peptidyl-tRNA hydrolase"/>
    <property type="match status" value="1"/>
</dbReference>
<dbReference type="Gene3D" id="3.40.50.1470">
    <property type="entry name" value="Peptidyl-tRNA hydrolase"/>
    <property type="match status" value="1"/>
</dbReference>
<dbReference type="HAMAP" id="MF_00083">
    <property type="entry name" value="Pept_tRNA_hydro_bact"/>
    <property type="match status" value="1"/>
</dbReference>
<dbReference type="InterPro" id="IPR001328">
    <property type="entry name" value="Pept_tRNA_hydro"/>
</dbReference>
<dbReference type="InterPro" id="IPR018171">
    <property type="entry name" value="Pept_tRNA_hydro_CS"/>
</dbReference>
<dbReference type="InterPro" id="IPR036416">
    <property type="entry name" value="Pept_tRNA_hydro_sf"/>
</dbReference>
<dbReference type="NCBIfam" id="TIGR00447">
    <property type="entry name" value="pth"/>
    <property type="match status" value="1"/>
</dbReference>
<dbReference type="PANTHER" id="PTHR17224">
    <property type="entry name" value="PEPTIDYL-TRNA HYDROLASE"/>
    <property type="match status" value="1"/>
</dbReference>
<dbReference type="PANTHER" id="PTHR17224:SF1">
    <property type="entry name" value="PEPTIDYL-TRNA HYDROLASE"/>
    <property type="match status" value="1"/>
</dbReference>
<dbReference type="Pfam" id="PF01195">
    <property type="entry name" value="Pept_tRNA_hydro"/>
    <property type="match status" value="1"/>
</dbReference>
<dbReference type="SUPFAM" id="SSF53178">
    <property type="entry name" value="Peptidyl-tRNA hydrolase-like"/>
    <property type="match status" value="1"/>
</dbReference>
<dbReference type="PROSITE" id="PS01195">
    <property type="entry name" value="PEPT_TRNA_HYDROL_1"/>
    <property type="match status" value="1"/>
</dbReference>
<dbReference type="PROSITE" id="PS01196">
    <property type="entry name" value="PEPT_TRNA_HYDROL_2"/>
    <property type="match status" value="1"/>
</dbReference>
<feature type="chain" id="PRO_0000187787" description="Peptidyl-tRNA hydrolase">
    <location>
        <begin position="1"/>
        <end position="188"/>
    </location>
</feature>
<feature type="active site" description="Proton acceptor" evidence="1">
    <location>
        <position position="19"/>
    </location>
</feature>
<feature type="binding site" evidence="1">
    <location>
        <position position="14"/>
    </location>
    <ligand>
        <name>tRNA</name>
        <dbReference type="ChEBI" id="CHEBI:17843"/>
    </ligand>
</feature>
<feature type="binding site" evidence="1">
    <location>
        <position position="64"/>
    </location>
    <ligand>
        <name>tRNA</name>
        <dbReference type="ChEBI" id="CHEBI:17843"/>
    </ligand>
</feature>
<feature type="binding site" evidence="1">
    <location>
        <position position="66"/>
    </location>
    <ligand>
        <name>tRNA</name>
        <dbReference type="ChEBI" id="CHEBI:17843"/>
    </ligand>
</feature>
<feature type="binding site" evidence="1">
    <location>
        <position position="112"/>
    </location>
    <ligand>
        <name>tRNA</name>
        <dbReference type="ChEBI" id="CHEBI:17843"/>
    </ligand>
</feature>
<feature type="site" description="Discriminates between blocked and unblocked aminoacyl-tRNA" evidence="1">
    <location>
        <position position="9"/>
    </location>
</feature>
<feature type="site" description="Stabilizes the basic form of H active site to accept a proton" evidence="1">
    <location>
        <position position="91"/>
    </location>
</feature>
<accession>Q6YR64</accession>
<gene>
    <name evidence="1" type="primary">pth</name>
    <name type="ordered locus">PAM_152</name>
</gene>
<evidence type="ECO:0000255" key="1">
    <source>
        <dbReference type="HAMAP-Rule" id="MF_00083"/>
    </source>
</evidence>